<dbReference type="EC" id="6.1.1.10" evidence="1"/>
<dbReference type="EMBL" id="CP000113">
    <property type="protein sequence ID" value="ABF91901.1"/>
    <property type="molecule type" value="Genomic_DNA"/>
</dbReference>
<dbReference type="RefSeq" id="WP_011552871.1">
    <property type="nucleotide sequence ID" value="NC_008095.1"/>
</dbReference>
<dbReference type="SMR" id="Q1D8K2"/>
<dbReference type="STRING" id="246197.MXAN_2804"/>
<dbReference type="EnsemblBacteria" id="ABF91901">
    <property type="protein sequence ID" value="ABF91901"/>
    <property type="gene ID" value="MXAN_2804"/>
</dbReference>
<dbReference type="GeneID" id="41360180"/>
<dbReference type="KEGG" id="mxa:MXAN_2804"/>
<dbReference type="eggNOG" id="COG0073">
    <property type="taxonomic scope" value="Bacteria"/>
</dbReference>
<dbReference type="eggNOG" id="COG0143">
    <property type="taxonomic scope" value="Bacteria"/>
</dbReference>
<dbReference type="HOGENOM" id="CLU_009710_7_0_7"/>
<dbReference type="OrthoDB" id="9810191at2"/>
<dbReference type="Proteomes" id="UP000002402">
    <property type="component" value="Chromosome"/>
</dbReference>
<dbReference type="GO" id="GO:0005829">
    <property type="term" value="C:cytosol"/>
    <property type="evidence" value="ECO:0007669"/>
    <property type="project" value="TreeGrafter"/>
</dbReference>
<dbReference type="GO" id="GO:0005524">
    <property type="term" value="F:ATP binding"/>
    <property type="evidence" value="ECO:0007669"/>
    <property type="project" value="UniProtKB-UniRule"/>
</dbReference>
<dbReference type="GO" id="GO:0046872">
    <property type="term" value="F:metal ion binding"/>
    <property type="evidence" value="ECO:0007669"/>
    <property type="project" value="UniProtKB-KW"/>
</dbReference>
<dbReference type="GO" id="GO:0004825">
    <property type="term" value="F:methionine-tRNA ligase activity"/>
    <property type="evidence" value="ECO:0007669"/>
    <property type="project" value="UniProtKB-UniRule"/>
</dbReference>
<dbReference type="GO" id="GO:0000049">
    <property type="term" value="F:tRNA binding"/>
    <property type="evidence" value="ECO:0007669"/>
    <property type="project" value="UniProtKB-KW"/>
</dbReference>
<dbReference type="GO" id="GO:0006431">
    <property type="term" value="P:methionyl-tRNA aminoacylation"/>
    <property type="evidence" value="ECO:0007669"/>
    <property type="project" value="UniProtKB-UniRule"/>
</dbReference>
<dbReference type="CDD" id="cd07957">
    <property type="entry name" value="Anticodon_Ia_Met"/>
    <property type="match status" value="1"/>
</dbReference>
<dbReference type="CDD" id="cd00814">
    <property type="entry name" value="MetRS_core"/>
    <property type="match status" value="1"/>
</dbReference>
<dbReference type="CDD" id="cd02800">
    <property type="entry name" value="tRNA_bind_EcMetRS_like"/>
    <property type="match status" value="1"/>
</dbReference>
<dbReference type="FunFam" id="2.20.28.20:FF:000001">
    <property type="entry name" value="Methionine--tRNA ligase"/>
    <property type="match status" value="1"/>
</dbReference>
<dbReference type="FunFam" id="2.40.50.140:FF:000042">
    <property type="entry name" value="Methionine--tRNA ligase"/>
    <property type="match status" value="1"/>
</dbReference>
<dbReference type="Gene3D" id="3.40.50.620">
    <property type="entry name" value="HUPs"/>
    <property type="match status" value="1"/>
</dbReference>
<dbReference type="Gene3D" id="1.10.730.10">
    <property type="entry name" value="Isoleucyl-tRNA Synthetase, Domain 1"/>
    <property type="match status" value="1"/>
</dbReference>
<dbReference type="Gene3D" id="2.20.28.20">
    <property type="entry name" value="Methionyl-tRNA synthetase, Zn-domain"/>
    <property type="match status" value="1"/>
</dbReference>
<dbReference type="Gene3D" id="2.40.50.140">
    <property type="entry name" value="Nucleic acid-binding proteins"/>
    <property type="match status" value="1"/>
</dbReference>
<dbReference type="HAMAP" id="MF_00098">
    <property type="entry name" value="Met_tRNA_synth_type1"/>
    <property type="match status" value="1"/>
</dbReference>
<dbReference type="InterPro" id="IPR001412">
    <property type="entry name" value="aa-tRNA-synth_I_CS"/>
</dbReference>
<dbReference type="InterPro" id="IPR041872">
    <property type="entry name" value="Anticodon_Met"/>
</dbReference>
<dbReference type="InterPro" id="IPR004495">
    <property type="entry name" value="Met-tRNA-synth_bsu_C"/>
</dbReference>
<dbReference type="InterPro" id="IPR023458">
    <property type="entry name" value="Met-tRNA_ligase_1"/>
</dbReference>
<dbReference type="InterPro" id="IPR014758">
    <property type="entry name" value="Met-tRNA_synth"/>
</dbReference>
<dbReference type="InterPro" id="IPR015413">
    <property type="entry name" value="Methionyl/Leucyl_tRNA_Synth"/>
</dbReference>
<dbReference type="InterPro" id="IPR033911">
    <property type="entry name" value="MetRS_core"/>
</dbReference>
<dbReference type="InterPro" id="IPR029038">
    <property type="entry name" value="MetRS_Zn"/>
</dbReference>
<dbReference type="InterPro" id="IPR012340">
    <property type="entry name" value="NA-bd_OB-fold"/>
</dbReference>
<dbReference type="InterPro" id="IPR014729">
    <property type="entry name" value="Rossmann-like_a/b/a_fold"/>
</dbReference>
<dbReference type="InterPro" id="IPR002547">
    <property type="entry name" value="tRNA-bd_dom"/>
</dbReference>
<dbReference type="InterPro" id="IPR009080">
    <property type="entry name" value="tRNAsynth_Ia_anticodon-bd"/>
</dbReference>
<dbReference type="NCBIfam" id="TIGR00398">
    <property type="entry name" value="metG"/>
    <property type="match status" value="1"/>
</dbReference>
<dbReference type="NCBIfam" id="TIGR00399">
    <property type="entry name" value="metG_C_term"/>
    <property type="match status" value="1"/>
</dbReference>
<dbReference type="NCBIfam" id="NF001100">
    <property type="entry name" value="PRK00133.1"/>
    <property type="match status" value="1"/>
</dbReference>
<dbReference type="PANTHER" id="PTHR45765">
    <property type="entry name" value="METHIONINE--TRNA LIGASE"/>
    <property type="match status" value="1"/>
</dbReference>
<dbReference type="PANTHER" id="PTHR45765:SF1">
    <property type="entry name" value="METHIONINE--TRNA LIGASE, CYTOPLASMIC"/>
    <property type="match status" value="1"/>
</dbReference>
<dbReference type="Pfam" id="PF19303">
    <property type="entry name" value="Anticodon_3"/>
    <property type="match status" value="1"/>
</dbReference>
<dbReference type="Pfam" id="PF09334">
    <property type="entry name" value="tRNA-synt_1g"/>
    <property type="match status" value="1"/>
</dbReference>
<dbReference type="Pfam" id="PF01588">
    <property type="entry name" value="tRNA_bind"/>
    <property type="match status" value="1"/>
</dbReference>
<dbReference type="PRINTS" id="PR01041">
    <property type="entry name" value="TRNASYNTHMET"/>
</dbReference>
<dbReference type="SUPFAM" id="SSF47323">
    <property type="entry name" value="Anticodon-binding domain of a subclass of class I aminoacyl-tRNA synthetases"/>
    <property type="match status" value="1"/>
</dbReference>
<dbReference type="SUPFAM" id="SSF57770">
    <property type="entry name" value="Methionyl-tRNA synthetase (MetRS), Zn-domain"/>
    <property type="match status" value="1"/>
</dbReference>
<dbReference type="SUPFAM" id="SSF50249">
    <property type="entry name" value="Nucleic acid-binding proteins"/>
    <property type="match status" value="1"/>
</dbReference>
<dbReference type="SUPFAM" id="SSF52374">
    <property type="entry name" value="Nucleotidylyl transferase"/>
    <property type="match status" value="1"/>
</dbReference>
<dbReference type="PROSITE" id="PS00178">
    <property type="entry name" value="AA_TRNA_LIGASE_I"/>
    <property type="match status" value="1"/>
</dbReference>
<dbReference type="PROSITE" id="PS50886">
    <property type="entry name" value="TRBD"/>
    <property type="match status" value="1"/>
</dbReference>
<protein>
    <recommendedName>
        <fullName evidence="1">Methionine--tRNA ligase</fullName>
        <ecNumber evidence="1">6.1.1.10</ecNumber>
    </recommendedName>
    <alternativeName>
        <fullName evidence="1">Methionyl-tRNA synthetase</fullName>
        <shortName evidence="1">MetRS</shortName>
    </alternativeName>
</protein>
<accession>Q1D8K2</accession>
<comment type="function">
    <text evidence="1">Is required not only for elongation of protein synthesis but also for the initiation of all mRNA translation through initiator tRNA(fMet) aminoacylation.</text>
</comment>
<comment type="catalytic activity">
    <reaction evidence="1">
        <text>tRNA(Met) + L-methionine + ATP = L-methionyl-tRNA(Met) + AMP + diphosphate</text>
        <dbReference type="Rhea" id="RHEA:13481"/>
        <dbReference type="Rhea" id="RHEA-COMP:9667"/>
        <dbReference type="Rhea" id="RHEA-COMP:9698"/>
        <dbReference type="ChEBI" id="CHEBI:30616"/>
        <dbReference type="ChEBI" id="CHEBI:33019"/>
        <dbReference type="ChEBI" id="CHEBI:57844"/>
        <dbReference type="ChEBI" id="CHEBI:78442"/>
        <dbReference type="ChEBI" id="CHEBI:78530"/>
        <dbReference type="ChEBI" id="CHEBI:456215"/>
        <dbReference type="EC" id="6.1.1.10"/>
    </reaction>
</comment>
<comment type="cofactor">
    <cofactor evidence="1">
        <name>Zn(2+)</name>
        <dbReference type="ChEBI" id="CHEBI:29105"/>
    </cofactor>
    <text evidence="1">Binds 1 zinc ion per subunit.</text>
</comment>
<comment type="subunit">
    <text evidence="1">Homodimer.</text>
</comment>
<comment type="subcellular location">
    <subcellularLocation>
        <location evidence="1">Cytoplasm</location>
    </subcellularLocation>
</comment>
<comment type="similarity">
    <text evidence="1">Belongs to the class-I aminoacyl-tRNA synthetase family. MetG type 1 subfamily.</text>
</comment>
<proteinExistence type="inferred from homology"/>
<keyword id="KW-0030">Aminoacyl-tRNA synthetase</keyword>
<keyword id="KW-0067">ATP-binding</keyword>
<keyword id="KW-0963">Cytoplasm</keyword>
<keyword id="KW-0436">Ligase</keyword>
<keyword id="KW-0479">Metal-binding</keyword>
<keyword id="KW-0547">Nucleotide-binding</keyword>
<keyword id="KW-0648">Protein biosynthesis</keyword>
<keyword id="KW-1185">Reference proteome</keyword>
<keyword id="KW-0694">RNA-binding</keyword>
<keyword id="KW-0820">tRNA-binding</keyword>
<keyword id="KW-0862">Zinc</keyword>
<feature type="chain" id="PRO_0000331852" description="Methionine--tRNA ligase">
    <location>
        <begin position="1"/>
        <end position="703"/>
    </location>
</feature>
<feature type="domain" description="tRNA-binding" evidence="1">
    <location>
        <begin position="602"/>
        <end position="703"/>
    </location>
</feature>
<feature type="region of interest" description="Disordered" evidence="2">
    <location>
        <begin position="556"/>
        <end position="594"/>
    </location>
</feature>
<feature type="region of interest" description="Disordered" evidence="2">
    <location>
        <begin position="682"/>
        <end position="703"/>
    </location>
</feature>
<feature type="short sequence motif" description="'HIGH' region">
    <location>
        <begin position="12"/>
        <end position="22"/>
    </location>
</feature>
<feature type="short sequence motif" description="'KMSKS' region">
    <location>
        <begin position="331"/>
        <end position="335"/>
    </location>
</feature>
<feature type="compositionally biased region" description="Low complexity" evidence="2">
    <location>
        <begin position="556"/>
        <end position="568"/>
    </location>
</feature>
<feature type="compositionally biased region" description="Low complexity" evidence="2">
    <location>
        <begin position="577"/>
        <end position="594"/>
    </location>
</feature>
<feature type="binding site" evidence="1">
    <location>
        <position position="143"/>
    </location>
    <ligand>
        <name>Zn(2+)</name>
        <dbReference type="ChEBI" id="CHEBI:29105"/>
    </ligand>
</feature>
<feature type="binding site" evidence="1">
    <location>
        <position position="146"/>
    </location>
    <ligand>
        <name>Zn(2+)</name>
        <dbReference type="ChEBI" id="CHEBI:29105"/>
    </ligand>
</feature>
<feature type="binding site" evidence="1">
    <location>
        <position position="156"/>
    </location>
    <ligand>
        <name>Zn(2+)</name>
        <dbReference type="ChEBI" id="CHEBI:29105"/>
    </ligand>
</feature>
<feature type="binding site" evidence="1">
    <location>
        <position position="159"/>
    </location>
    <ligand>
        <name>Zn(2+)</name>
        <dbReference type="ChEBI" id="CHEBI:29105"/>
    </ligand>
</feature>
<feature type="binding site" evidence="1">
    <location>
        <position position="334"/>
    </location>
    <ligand>
        <name>ATP</name>
        <dbReference type="ChEBI" id="CHEBI:30616"/>
    </ligand>
</feature>
<evidence type="ECO:0000255" key="1">
    <source>
        <dbReference type="HAMAP-Rule" id="MF_00098"/>
    </source>
</evidence>
<evidence type="ECO:0000256" key="2">
    <source>
        <dbReference type="SAM" id="MobiDB-lite"/>
    </source>
</evidence>
<name>SYM_MYXXD</name>
<sequence>MAERTLVTSALPYANGPLHIGHAVEYVQTDIYVRFLRSCGRDVVYFCADDTHGTPIELNAAKQGLKPEEFIARFHEEHQRDFHDLDVRFDYFHSTNSPENRQYAELIYGRLKEKGDIERRNIEQTYCENDRRFLPDRFIKGTCPNCKASDQYGDACEKCGKAYDPTDLIDARCALCGTPPVRKHSEHLFFKLSRHEDFLQDVLRKPGFIHPGLATQLQGFFEKGLSDWDISRDGPYFGFAIPGETDKYFYVWLDAPIGYIATTEKWAKETGKAKSALDYWSADADTRIIHFIGKDIVYFHALFWPAVLNVAGFHIPSEIKVHGHLMLNGEKMSKTRGTMVPVRDYLDQLDPSYLRYFYAANLGPGVEDLDLNLKDFRQRVNGELVNNVGNLANRALSLLAGPLEKRLAPGRAEGPGRELVEAALARVPEVRDAFDKLEYRSAIRVITEIASAANGFLQTAAPWAQVKKDAEVARADLSDAADVAYLLGALLAPVTPRLSEKLFAQLGAEPLTFQALEGAKYPLLDRSRPIGTPEPLLPRLEEERVNAIIKLPEGAAAPQAAEARPAKGAKTEKKPAEAPAATQAAAPSAGAAESPGEIEYDDFAKVVLKAGKVLAAEKVQKADKLLKLTVDVGEGSPRTIVSGIAEAFAPEALTGRNVVVVANLKPRKLKGIESRGMLLTAGPGGKELSLLDPGDVAPGSEVK</sequence>
<reference key="1">
    <citation type="journal article" date="2006" name="Proc. Natl. Acad. Sci. U.S.A.">
        <title>Evolution of sensory complexity recorded in a myxobacterial genome.</title>
        <authorList>
            <person name="Goldman B.S."/>
            <person name="Nierman W.C."/>
            <person name="Kaiser D."/>
            <person name="Slater S.C."/>
            <person name="Durkin A.S."/>
            <person name="Eisen J.A."/>
            <person name="Ronning C.M."/>
            <person name="Barbazuk W.B."/>
            <person name="Blanchard M."/>
            <person name="Field C."/>
            <person name="Halling C."/>
            <person name="Hinkle G."/>
            <person name="Iartchuk O."/>
            <person name="Kim H.S."/>
            <person name="Mackenzie C."/>
            <person name="Madupu R."/>
            <person name="Miller N."/>
            <person name="Shvartsbeyn A."/>
            <person name="Sullivan S.A."/>
            <person name="Vaudin M."/>
            <person name="Wiegand R."/>
            <person name="Kaplan H.B."/>
        </authorList>
    </citation>
    <scope>NUCLEOTIDE SEQUENCE [LARGE SCALE GENOMIC DNA]</scope>
    <source>
        <strain>DK1622</strain>
    </source>
</reference>
<gene>
    <name evidence="1" type="primary">metG</name>
    <name type="ordered locus">MXAN_2804</name>
</gene>
<organism>
    <name type="scientific">Myxococcus xanthus (strain DK1622)</name>
    <dbReference type="NCBI Taxonomy" id="246197"/>
    <lineage>
        <taxon>Bacteria</taxon>
        <taxon>Pseudomonadati</taxon>
        <taxon>Myxococcota</taxon>
        <taxon>Myxococcia</taxon>
        <taxon>Myxococcales</taxon>
        <taxon>Cystobacterineae</taxon>
        <taxon>Myxococcaceae</taxon>
        <taxon>Myxococcus</taxon>
    </lineage>
</organism>